<name>Y1061_METJA</name>
<comment type="similarity">
    <text evidence="1">Belongs to the polysaccharide synthase family.</text>
</comment>
<protein>
    <recommendedName>
        <fullName>Uncharacterized membrane protein MJ1061</fullName>
    </recommendedName>
</protein>
<gene>
    <name type="ordered locus">MJ1061</name>
</gene>
<sequence length="333" mass="37846">MFQDISNFYKDKTILVTGGTGSIGKEIVKTLLKFNPKTIRVLDINETALFELEHELNSEKIRCFIGDVRDKDRLKRAIEEVDVVFHAAALKHVPLCEYNPFEAVKTNVIGTQNLIEVAMDEEVEKFITISTDKAVNPVNVMGATKLLAERLTISANLYKGKRKTAFSVVRFGNVLNSRGSILPLLKEQIKKGGPVTLTHPDMTRFIMSINEAVKLVLKACYLAKGGEIFILKMPSVRIKDLIEVVIEELAPKYGYKPEDIEIKIIGKRPGEKLYEELIIEEEIYNLEELEDMFVVYPYGVDGNKNNKIIYNSKDAKFLNKEKIKKILKEISYL</sequence>
<dbReference type="EMBL" id="L77117">
    <property type="protein sequence ID" value="AAB99064.1"/>
    <property type="molecule type" value="Genomic_DNA"/>
</dbReference>
<dbReference type="PIR" id="D64432">
    <property type="entry name" value="D64432"/>
</dbReference>
<dbReference type="RefSeq" id="WP_010870574.1">
    <property type="nucleotide sequence ID" value="NC_000909.1"/>
</dbReference>
<dbReference type="SMR" id="Q58461"/>
<dbReference type="STRING" id="243232.MJ_1061"/>
<dbReference type="PaxDb" id="243232-MJ_1061"/>
<dbReference type="EnsemblBacteria" id="AAB99064">
    <property type="protein sequence ID" value="AAB99064"/>
    <property type="gene ID" value="MJ_1061"/>
</dbReference>
<dbReference type="GeneID" id="1451958"/>
<dbReference type="KEGG" id="mja:MJ_1061"/>
<dbReference type="eggNOG" id="arCOG01375">
    <property type="taxonomic scope" value="Archaea"/>
</dbReference>
<dbReference type="HOGENOM" id="CLU_013560_4_1_2"/>
<dbReference type="InParanoid" id="Q58461"/>
<dbReference type="OrthoDB" id="4907at2157"/>
<dbReference type="PhylomeDB" id="Q58461"/>
<dbReference type="Proteomes" id="UP000000805">
    <property type="component" value="Chromosome"/>
</dbReference>
<dbReference type="CDD" id="cd05237">
    <property type="entry name" value="UDP_invert_4-6DH_SDR_e"/>
    <property type="match status" value="1"/>
</dbReference>
<dbReference type="Gene3D" id="3.40.50.720">
    <property type="entry name" value="NAD(P)-binding Rossmann-like Domain"/>
    <property type="match status" value="1"/>
</dbReference>
<dbReference type="InterPro" id="IPR036291">
    <property type="entry name" value="NAD(P)-bd_dom_sf"/>
</dbReference>
<dbReference type="InterPro" id="IPR003869">
    <property type="entry name" value="Polysac_CapD-like"/>
</dbReference>
<dbReference type="InterPro" id="IPR051203">
    <property type="entry name" value="Polysaccharide_Synthase-Rel"/>
</dbReference>
<dbReference type="PANTHER" id="PTHR43318">
    <property type="entry name" value="UDP-N-ACETYLGLUCOSAMINE 4,6-DEHYDRATASE"/>
    <property type="match status" value="1"/>
</dbReference>
<dbReference type="PANTHER" id="PTHR43318:SF2">
    <property type="entry name" value="UDP-N-ACETYLGLUCOSAMINE 4,6-DEHYDRATASE (INVERTING)"/>
    <property type="match status" value="1"/>
</dbReference>
<dbReference type="Pfam" id="PF02719">
    <property type="entry name" value="Polysacc_synt_2"/>
    <property type="match status" value="1"/>
</dbReference>
<dbReference type="SUPFAM" id="SSF51735">
    <property type="entry name" value="NAD(P)-binding Rossmann-fold domains"/>
    <property type="match status" value="1"/>
</dbReference>
<feature type="chain" id="PRO_0000166459" description="Uncharacterized membrane protein MJ1061">
    <location>
        <begin position="1"/>
        <end position="333"/>
    </location>
</feature>
<organism>
    <name type="scientific">Methanocaldococcus jannaschii (strain ATCC 43067 / DSM 2661 / JAL-1 / JCM 10045 / NBRC 100440)</name>
    <name type="common">Methanococcus jannaschii</name>
    <dbReference type="NCBI Taxonomy" id="243232"/>
    <lineage>
        <taxon>Archaea</taxon>
        <taxon>Methanobacteriati</taxon>
        <taxon>Methanobacteriota</taxon>
        <taxon>Methanomada group</taxon>
        <taxon>Methanococci</taxon>
        <taxon>Methanococcales</taxon>
        <taxon>Methanocaldococcaceae</taxon>
        <taxon>Methanocaldococcus</taxon>
    </lineage>
</organism>
<proteinExistence type="inferred from homology"/>
<keyword id="KW-1185">Reference proteome</keyword>
<reference key="1">
    <citation type="journal article" date="1996" name="Science">
        <title>Complete genome sequence of the methanogenic archaeon, Methanococcus jannaschii.</title>
        <authorList>
            <person name="Bult C.J."/>
            <person name="White O."/>
            <person name="Olsen G.J."/>
            <person name="Zhou L."/>
            <person name="Fleischmann R.D."/>
            <person name="Sutton G.G."/>
            <person name="Blake J.A."/>
            <person name="FitzGerald L.M."/>
            <person name="Clayton R.A."/>
            <person name="Gocayne J.D."/>
            <person name="Kerlavage A.R."/>
            <person name="Dougherty B.A."/>
            <person name="Tomb J.-F."/>
            <person name="Adams M.D."/>
            <person name="Reich C.I."/>
            <person name="Overbeek R."/>
            <person name="Kirkness E.F."/>
            <person name="Weinstock K.G."/>
            <person name="Merrick J.M."/>
            <person name="Glodek A."/>
            <person name="Scott J.L."/>
            <person name="Geoghagen N.S.M."/>
            <person name="Weidman J.F."/>
            <person name="Fuhrmann J.L."/>
            <person name="Nguyen D."/>
            <person name="Utterback T.R."/>
            <person name="Kelley J.M."/>
            <person name="Peterson J.D."/>
            <person name="Sadow P.W."/>
            <person name="Hanna M.C."/>
            <person name="Cotton M.D."/>
            <person name="Roberts K.M."/>
            <person name="Hurst M.A."/>
            <person name="Kaine B.P."/>
            <person name="Borodovsky M."/>
            <person name="Klenk H.-P."/>
            <person name="Fraser C.M."/>
            <person name="Smith H.O."/>
            <person name="Woese C.R."/>
            <person name="Venter J.C."/>
        </authorList>
    </citation>
    <scope>NUCLEOTIDE SEQUENCE [LARGE SCALE GENOMIC DNA]</scope>
    <source>
        <strain>ATCC 43067 / DSM 2661 / JAL-1 / JCM 10045 / NBRC 100440</strain>
    </source>
</reference>
<evidence type="ECO:0000305" key="1"/>
<accession>Q58461</accession>